<proteinExistence type="inferred from homology"/>
<comment type="function">
    <text evidence="1">Nucleotide-binding protein.</text>
</comment>
<comment type="similarity">
    <text evidence="1">Belongs to the YajQ family.</text>
</comment>
<organism>
    <name type="scientific">Ralstonia pickettii (strain 12J)</name>
    <dbReference type="NCBI Taxonomy" id="402626"/>
    <lineage>
        <taxon>Bacteria</taxon>
        <taxon>Pseudomonadati</taxon>
        <taxon>Pseudomonadota</taxon>
        <taxon>Betaproteobacteria</taxon>
        <taxon>Burkholderiales</taxon>
        <taxon>Burkholderiaceae</taxon>
        <taxon>Ralstonia</taxon>
    </lineage>
</organism>
<accession>B2UBA0</accession>
<keyword id="KW-0547">Nucleotide-binding</keyword>
<reference key="1">
    <citation type="submission" date="2008-05" db="EMBL/GenBank/DDBJ databases">
        <title>Complete sequence of chromosome 1 of Ralstonia pickettii 12J.</title>
        <authorList>
            <person name="Lucas S."/>
            <person name="Copeland A."/>
            <person name="Lapidus A."/>
            <person name="Glavina del Rio T."/>
            <person name="Dalin E."/>
            <person name="Tice H."/>
            <person name="Bruce D."/>
            <person name="Goodwin L."/>
            <person name="Pitluck S."/>
            <person name="Meincke L."/>
            <person name="Brettin T."/>
            <person name="Detter J.C."/>
            <person name="Han C."/>
            <person name="Kuske C.R."/>
            <person name="Schmutz J."/>
            <person name="Larimer F."/>
            <person name="Land M."/>
            <person name="Hauser L."/>
            <person name="Kyrpides N."/>
            <person name="Mikhailova N."/>
            <person name="Marsh T."/>
            <person name="Richardson P."/>
        </authorList>
    </citation>
    <scope>NUCLEOTIDE SEQUENCE [LARGE SCALE GENOMIC DNA]</scope>
    <source>
        <strain>12J</strain>
    </source>
</reference>
<name>Y2826_RALPJ</name>
<dbReference type="EMBL" id="CP001068">
    <property type="protein sequence ID" value="ACD27949.1"/>
    <property type="molecule type" value="Genomic_DNA"/>
</dbReference>
<dbReference type="SMR" id="B2UBA0"/>
<dbReference type="STRING" id="402626.Rpic_2826"/>
<dbReference type="KEGG" id="rpi:Rpic_2826"/>
<dbReference type="PATRIC" id="fig|402626.5.peg.3963"/>
<dbReference type="eggNOG" id="COG1666">
    <property type="taxonomic scope" value="Bacteria"/>
</dbReference>
<dbReference type="HOGENOM" id="CLU_099839_1_0_4"/>
<dbReference type="GO" id="GO:0005829">
    <property type="term" value="C:cytosol"/>
    <property type="evidence" value="ECO:0007669"/>
    <property type="project" value="TreeGrafter"/>
</dbReference>
<dbReference type="GO" id="GO:0000166">
    <property type="term" value="F:nucleotide binding"/>
    <property type="evidence" value="ECO:0007669"/>
    <property type="project" value="TreeGrafter"/>
</dbReference>
<dbReference type="CDD" id="cd11740">
    <property type="entry name" value="YajQ_like"/>
    <property type="match status" value="1"/>
</dbReference>
<dbReference type="Gene3D" id="3.30.70.860">
    <property type="match status" value="1"/>
</dbReference>
<dbReference type="Gene3D" id="3.30.70.990">
    <property type="entry name" value="YajQ-like, domain 2"/>
    <property type="match status" value="1"/>
</dbReference>
<dbReference type="HAMAP" id="MF_00632">
    <property type="entry name" value="YajQ"/>
    <property type="match status" value="1"/>
</dbReference>
<dbReference type="InterPro" id="IPR007551">
    <property type="entry name" value="DUF520"/>
</dbReference>
<dbReference type="InterPro" id="IPR035571">
    <property type="entry name" value="UPF0234-like_C"/>
</dbReference>
<dbReference type="InterPro" id="IPR035570">
    <property type="entry name" value="UPF0234_N"/>
</dbReference>
<dbReference type="InterPro" id="IPR036183">
    <property type="entry name" value="YajQ-like_sf"/>
</dbReference>
<dbReference type="NCBIfam" id="NF003819">
    <property type="entry name" value="PRK05412.1"/>
    <property type="match status" value="1"/>
</dbReference>
<dbReference type="PANTHER" id="PTHR30476">
    <property type="entry name" value="UPF0234 PROTEIN YAJQ"/>
    <property type="match status" value="1"/>
</dbReference>
<dbReference type="PANTHER" id="PTHR30476:SF0">
    <property type="entry name" value="UPF0234 PROTEIN YAJQ"/>
    <property type="match status" value="1"/>
</dbReference>
<dbReference type="Pfam" id="PF04461">
    <property type="entry name" value="DUF520"/>
    <property type="match status" value="1"/>
</dbReference>
<dbReference type="SUPFAM" id="SSF89963">
    <property type="entry name" value="YajQ-like"/>
    <property type="match status" value="2"/>
</dbReference>
<feature type="chain" id="PRO_1000130643" description="Nucleotide-binding protein Rpic_2826">
    <location>
        <begin position="1"/>
        <end position="161"/>
    </location>
</feature>
<protein>
    <recommendedName>
        <fullName evidence="1">Nucleotide-binding protein Rpic_2826</fullName>
    </recommendedName>
</protein>
<evidence type="ECO:0000255" key="1">
    <source>
        <dbReference type="HAMAP-Rule" id="MF_00632"/>
    </source>
</evidence>
<sequence>MPSFDVVCEANMVEVKNAVEQANKEISTRFDFKGSDSRVEHKEQELTLFADDDFKIEQVNDVLMNKLAKRNVDVRFLDYQDKQKIGGDKMKQVVKIKKGVSGDLAKKIVKTIKDSKIKVQASIQGDAVRVTGAKRDDLQSVIAMLRKEVSDTPLDFNNFRD</sequence>
<gene>
    <name type="ordered locus">Rpic_2826</name>
</gene>